<evidence type="ECO:0000255" key="1">
    <source>
        <dbReference type="HAMAP-Rule" id="MF_01317"/>
    </source>
</evidence>
<name>PSBL_RIPO1</name>
<dbReference type="EMBL" id="CP001287">
    <property type="protein sequence ID" value="ACK68077.1"/>
    <property type="molecule type" value="Genomic_DNA"/>
</dbReference>
<dbReference type="RefSeq" id="WP_012598216.1">
    <property type="nucleotide sequence ID" value="NC_011726.1"/>
</dbReference>
<dbReference type="SMR" id="B7K624"/>
<dbReference type="STRING" id="41431.PCC8801_4145"/>
<dbReference type="KEGG" id="cyp:PCC8801_4145"/>
<dbReference type="eggNOG" id="ENOG5033AKP">
    <property type="taxonomic scope" value="Bacteria"/>
</dbReference>
<dbReference type="HOGENOM" id="CLU_214425_0_0_3"/>
<dbReference type="Proteomes" id="UP000008204">
    <property type="component" value="Chromosome"/>
</dbReference>
<dbReference type="GO" id="GO:0009539">
    <property type="term" value="C:photosystem II reaction center"/>
    <property type="evidence" value="ECO:0007669"/>
    <property type="project" value="InterPro"/>
</dbReference>
<dbReference type="GO" id="GO:0031676">
    <property type="term" value="C:plasma membrane-derived thylakoid membrane"/>
    <property type="evidence" value="ECO:0007669"/>
    <property type="project" value="UniProtKB-SubCell"/>
</dbReference>
<dbReference type="GO" id="GO:0015979">
    <property type="term" value="P:photosynthesis"/>
    <property type="evidence" value="ECO:0007669"/>
    <property type="project" value="UniProtKB-UniRule"/>
</dbReference>
<dbReference type="HAMAP" id="MF_01317">
    <property type="entry name" value="PSII_PsbL"/>
    <property type="match status" value="1"/>
</dbReference>
<dbReference type="InterPro" id="IPR003372">
    <property type="entry name" value="PSII_PsbL"/>
</dbReference>
<dbReference type="InterPro" id="IPR037266">
    <property type="entry name" value="PSII_PsbL_sf"/>
</dbReference>
<dbReference type="NCBIfam" id="NF001972">
    <property type="entry name" value="PRK00753.1"/>
    <property type="match status" value="1"/>
</dbReference>
<dbReference type="Pfam" id="PF02419">
    <property type="entry name" value="PsbL"/>
    <property type="match status" value="1"/>
</dbReference>
<dbReference type="SUPFAM" id="SSF161017">
    <property type="entry name" value="Photosystem II reaction center protein L, PsbL"/>
    <property type="match status" value="1"/>
</dbReference>
<protein>
    <recommendedName>
        <fullName evidence="1">Photosystem II reaction center protein L</fullName>
        <shortName evidence="1">PSII-L</shortName>
    </recommendedName>
</protein>
<sequence>MERNTNPNRQPVELNRTSLYLGLLLVAVLGILFSSYFFN</sequence>
<gene>
    <name evidence="1" type="primary">psbL</name>
    <name type="ordered locus">PCC8801_4145</name>
</gene>
<proteinExistence type="inferred from homology"/>
<feature type="chain" id="PRO_1000141342" description="Photosystem II reaction center protein L">
    <location>
        <begin position="1"/>
        <end position="39"/>
    </location>
</feature>
<feature type="transmembrane region" description="Helical" evidence="1">
    <location>
        <begin position="18"/>
        <end position="38"/>
    </location>
</feature>
<keyword id="KW-0472">Membrane</keyword>
<keyword id="KW-0602">Photosynthesis</keyword>
<keyword id="KW-0604">Photosystem II</keyword>
<keyword id="KW-0674">Reaction center</keyword>
<keyword id="KW-1185">Reference proteome</keyword>
<keyword id="KW-0793">Thylakoid</keyword>
<keyword id="KW-0812">Transmembrane</keyword>
<keyword id="KW-1133">Transmembrane helix</keyword>
<comment type="function">
    <text evidence="1">One of the components of the core complex of photosystem II (PSII). PSII is a light-driven water:plastoquinone oxidoreductase that uses light energy to abstract electrons from H(2)O, generating O(2) and a proton gradient subsequently used for ATP formation. It consists of a core antenna complex that captures photons, and an electron transfer chain that converts photonic excitation into a charge separation. This subunit is found at the monomer-monomer interface and is required for correct PSII assembly and/or dimerization.</text>
</comment>
<comment type="subunit">
    <text evidence="1">PSII is composed of 1 copy each of membrane proteins PsbA, PsbB, PsbC, PsbD, PsbE, PsbF, PsbH, PsbI, PsbJ, PsbK, PsbL, PsbM, PsbT, PsbX, PsbY, PsbZ, Psb30/Ycf12, peripheral proteins PsbO, CyanoQ (PsbQ), PsbU, PsbV and a large number of cofactors. It forms dimeric complexes.</text>
</comment>
<comment type="subcellular location">
    <subcellularLocation>
        <location evidence="1">Cellular thylakoid membrane</location>
        <topology evidence="1">Single-pass membrane protein</topology>
    </subcellularLocation>
</comment>
<comment type="similarity">
    <text evidence="1">Belongs to the PsbL family.</text>
</comment>
<accession>B7K624</accession>
<organism>
    <name type="scientific">Rippkaea orientalis (strain PCC 8801 / RF-1)</name>
    <name type="common">Cyanothece sp. (strain PCC 8801)</name>
    <dbReference type="NCBI Taxonomy" id="41431"/>
    <lineage>
        <taxon>Bacteria</taxon>
        <taxon>Bacillati</taxon>
        <taxon>Cyanobacteriota</taxon>
        <taxon>Cyanophyceae</taxon>
        <taxon>Oscillatoriophycideae</taxon>
        <taxon>Chroococcales</taxon>
        <taxon>Aphanothecaceae</taxon>
        <taxon>Rippkaea</taxon>
        <taxon>Rippkaea orientalis</taxon>
    </lineage>
</organism>
<reference key="1">
    <citation type="journal article" date="2011" name="MBio">
        <title>Novel metabolic attributes of the genus Cyanothece, comprising a group of unicellular nitrogen-fixing Cyanobacteria.</title>
        <authorList>
            <person name="Bandyopadhyay A."/>
            <person name="Elvitigala T."/>
            <person name="Welsh E."/>
            <person name="Stockel J."/>
            <person name="Liberton M."/>
            <person name="Min H."/>
            <person name="Sherman L.A."/>
            <person name="Pakrasi H.B."/>
        </authorList>
    </citation>
    <scope>NUCLEOTIDE SEQUENCE [LARGE SCALE GENOMIC DNA]</scope>
    <source>
        <strain>PCC 8801 / RF-1</strain>
    </source>
</reference>